<proteinExistence type="evidence at transcript level"/>
<comment type="function">
    <text evidence="1">Involved in the retrograde transport from endosome to plasma membrane, a trafficking pathway that promotes the recycling of internalized transmembrane proteins. Following internalization, endocytosed transmembrane proteins are delivered to early endosomes and recycled to the plasma membrane instead of being degraded in lysosomes. SNX27 specifically binds and directs sorting of a subset of transmembrane proteins containing a PDZ-binding motif at the C-terminus: following interaction with target transmembrane proteins, associates with the retromer complex, preventing entry into the lysosomal pathway, and promotes retromer-tubule based plasma membrane recycling. SNX27 also binds with the WASH complex. Interacts with membranes containing phosphatidylinositol-3-phosphate (PtdIns(3P)). May participate in establishment of natural killer cell polarity. Recruits CYTIP to early endosomes (By similarity).</text>
</comment>
<comment type="subunit">
    <text evidence="1 2">Core component of the SNX27-retromer, a multiprotein complex composed of SNX27, the WASH complex and the retromer complex. Interacts (via PDZ domain) with a number of target transmembrane proteins (via PDZ-binding motif): ABCC4, ADRB2, ARHGEF7, GRIA1, GRIA2, GRIN1, GRIN2A GRIN2C, KCNJ6, KCNJ9 and SLC2A1/GLUT1. Interacts (via the FERM-like regions) with the WASH complex. Interacts with SNX1. Interacts with CYTIP. Interacts with DGKZ. Interacts with MCC (By similarity). Interacts (via PDZ domains) with SLC9A3; directs SLC9A3 membrane insertion from early endosomes to the plasma membrane (By similarity).</text>
</comment>
<comment type="subcellular location">
    <subcellularLocation>
        <location evidence="1">Early endosome membrane</location>
        <topology evidence="1">Peripheral membrane protein</topology>
    </subcellularLocation>
    <subcellularLocation>
        <location evidence="1">Cytoplasm</location>
        <location evidence="1">Cytosol</location>
    </subcellularLocation>
    <text evidence="1">Localizes to immunological synapse in T-cells. In T-cells, recruited from the cytosol to sorting endosomes by phosphoinositide-3-kinase products (By similarity).</text>
</comment>
<comment type="domain">
    <text evidence="1">The PDZ domain mediates binding to a subset of proteins containing a PDZ-binding motif at the C-terminus: the specificity for PDZ-binding motif is provided by the 2 residues located upstream of the canonical PDZ-binding motif. The PDZ domain also mediates binding to the retromer complex via direct interaction with VPS26 (VPS26A or VPS26B).</text>
</comment>
<comment type="domain">
    <text evidence="1">The PX domain mediates binding to phosphatidylinositol 3-phosphate (PtdIns(3P)) and localization to early endosome membranes.</text>
</comment>
<organism>
    <name type="scientific">Bos taurus</name>
    <name type="common">Bovine</name>
    <dbReference type="NCBI Taxonomy" id="9913"/>
    <lineage>
        <taxon>Eukaryota</taxon>
        <taxon>Metazoa</taxon>
        <taxon>Chordata</taxon>
        <taxon>Craniata</taxon>
        <taxon>Vertebrata</taxon>
        <taxon>Euteleostomi</taxon>
        <taxon>Mammalia</taxon>
        <taxon>Eutheria</taxon>
        <taxon>Laurasiatheria</taxon>
        <taxon>Artiodactyla</taxon>
        <taxon>Ruminantia</taxon>
        <taxon>Pecora</taxon>
        <taxon>Bovidae</taxon>
        <taxon>Bovinae</taxon>
        <taxon>Bos</taxon>
    </lineage>
</organism>
<evidence type="ECO:0000250" key="1"/>
<evidence type="ECO:0000250" key="2">
    <source>
        <dbReference type="UniProtKB" id="Q96L92"/>
    </source>
</evidence>
<evidence type="ECO:0000255" key="3">
    <source>
        <dbReference type="PROSITE-ProRule" id="PRU00143"/>
    </source>
</evidence>
<evidence type="ECO:0000255" key="4">
    <source>
        <dbReference type="PROSITE-ProRule" id="PRU00147"/>
    </source>
</evidence>
<evidence type="ECO:0000255" key="5">
    <source>
        <dbReference type="PROSITE-ProRule" id="PRU00166"/>
    </source>
</evidence>
<evidence type="ECO:0000256" key="6">
    <source>
        <dbReference type="SAM" id="MobiDB-lite"/>
    </source>
</evidence>
<protein>
    <recommendedName>
        <fullName>Sorting nexin-27</fullName>
    </recommendedName>
</protein>
<keyword id="KW-0963">Cytoplasm</keyword>
<keyword id="KW-0967">Endosome</keyword>
<keyword id="KW-0446">Lipid-binding</keyword>
<keyword id="KW-0472">Membrane</keyword>
<keyword id="KW-0597">Phosphoprotein</keyword>
<keyword id="KW-0653">Protein transport</keyword>
<keyword id="KW-1185">Reference proteome</keyword>
<keyword id="KW-0813">Transport</keyword>
<dbReference type="EMBL" id="BC142417">
    <property type="protein sequence ID" value="AAI42418.1"/>
    <property type="molecule type" value="mRNA"/>
</dbReference>
<dbReference type="RefSeq" id="NP_001092426.1">
    <property type="nucleotide sequence ID" value="NM_001098956.2"/>
</dbReference>
<dbReference type="SMR" id="A5PKA5"/>
<dbReference type="FunCoup" id="A5PKA5">
    <property type="interactions" value="3550"/>
</dbReference>
<dbReference type="STRING" id="9913.ENSBTAP00000033754"/>
<dbReference type="PaxDb" id="9913-ENSBTAP00000033754"/>
<dbReference type="Ensembl" id="ENSBTAT00000103539.1">
    <property type="protein sequence ID" value="ENSBTAP00000081550.1"/>
    <property type="gene ID" value="ENSBTAG00000001942.7"/>
</dbReference>
<dbReference type="GeneID" id="513214"/>
<dbReference type="KEGG" id="bta:513214"/>
<dbReference type="CTD" id="81609"/>
<dbReference type="VEuPathDB" id="HostDB:ENSBTAG00000001942"/>
<dbReference type="VGNC" id="VGNC:35105">
    <property type="gene designation" value="SNX27"/>
</dbReference>
<dbReference type="eggNOG" id="KOG3784">
    <property type="taxonomic scope" value="Eukaryota"/>
</dbReference>
<dbReference type="GeneTree" id="ENSGT00950000183212"/>
<dbReference type="HOGENOM" id="CLU_028138_0_0_1"/>
<dbReference type="InParanoid" id="A5PKA5"/>
<dbReference type="OMA" id="PNEFPHN"/>
<dbReference type="OrthoDB" id="10036828at2759"/>
<dbReference type="TreeFam" id="TF318398"/>
<dbReference type="Proteomes" id="UP000009136">
    <property type="component" value="Chromosome 3"/>
</dbReference>
<dbReference type="Bgee" id="ENSBTAG00000001942">
    <property type="expression patterns" value="Expressed in monocyte and 103 other cell types or tissues"/>
</dbReference>
<dbReference type="GO" id="GO:0005829">
    <property type="term" value="C:cytosol"/>
    <property type="evidence" value="ECO:0007669"/>
    <property type="project" value="UniProtKB-SubCell"/>
</dbReference>
<dbReference type="GO" id="GO:0005769">
    <property type="term" value="C:early endosome"/>
    <property type="evidence" value="ECO:0000250"/>
    <property type="project" value="UniProtKB"/>
</dbReference>
<dbReference type="GO" id="GO:0031901">
    <property type="term" value="C:early endosome membrane"/>
    <property type="evidence" value="ECO:0007669"/>
    <property type="project" value="UniProtKB-SubCell"/>
</dbReference>
<dbReference type="GO" id="GO:0001772">
    <property type="term" value="C:immunological synapse"/>
    <property type="evidence" value="ECO:0000250"/>
    <property type="project" value="UniProtKB"/>
</dbReference>
<dbReference type="GO" id="GO:0035091">
    <property type="term" value="F:phosphatidylinositol binding"/>
    <property type="evidence" value="ECO:0000318"/>
    <property type="project" value="GO_Central"/>
</dbReference>
<dbReference type="GO" id="GO:0032266">
    <property type="term" value="F:phosphatidylinositol-3-phosphate binding"/>
    <property type="evidence" value="ECO:0000250"/>
    <property type="project" value="UniProtKB"/>
</dbReference>
<dbReference type="GO" id="GO:0032456">
    <property type="term" value="P:endocytic recycling"/>
    <property type="evidence" value="ECO:0000250"/>
    <property type="project" value="UniProtKB"/>
</dbReference>
<dbReference type="GO" id="GO:0016197">
    <property type="term" value="P:endosomal transport"/>
    <property type="evidence" value="ECO:0000250"/>
    <property type="project" value="UniProtKB"/>
</dbReference>
<dbReference type="GO" id="GO:0006886">
    <property type="term" value="P:intracellular protein transport"/>
    <property type="evidence" value="ECO:0000250"/>
    <property type="project" value="UniProtKB"/>
</dbReference>
<dbReference type="GO" id="GO:0007165">
    <property type="term" value="P:signal transduction"/>
    <property type="evidence" value="ECO:0007669"/>
    <property type="project" value="InterPro"/>
</dbReference>
<dbReference type="CDD" id="cd13338">
    <property type="entry name" value="FERM-like_C_SNX27"/>
    <property type="match status" value="1"/>
</dbReference>
<dbReference type="CDD" id="cd01777">
    <property type="entry name" value="FERM_F1_SNX27"/>
    <property type="match status" value="1"/>
</dbReference>
<dbReference type="CDD" id="cd23070">
    <property type="entry name" value="PDZ_SNX27-like"/>
    <property type="match status" value="1"/>
</dbReference>
<dbReference type="CDD" id="cd06886">
    <property type="entry name" value="PX_SNX27"/>
    <property type="match status" value="1"/>
</dbReference>
<dbReference type="FunFam" id="1.20.80.60:FF:000002">
    <property type="entry name" value="sorting nexin-27 isoform X2"/>
    <property type="match status" value="1"/>
</dbReference>
<dbReference type="FunFam" id="2.30.42.10:FF:000061">
    <property type="entry name" value="sorting nexin-27 isoform X2"/>
    <property type="match status" value="1"/>
</dbReference>
<dbReference type="FunFam" id="3.10.20.90:FF:000075">
    <property type="entry name" value="sorting nexin-27 isoform X2"/>
    <property type="match status" value="1"/>
</dbReference>
<dbReference type="FunFam" id="3.30.1520.10:FF:000003">
    <property type="entry name" value="sorting nexin-27 isoform X2"/>
    <property type="match status" value="1"/>
</dbReference>
<dbReference type="Gene3D" id="1.20.80.60">
    <property type="match status" value="1"/>
</dbReference>
<dbReference type="Gene3D" id="2.30.42.10">
    <property type="match status" value="1"/>
</dbReference>
<dbReference type="Gene3D" id="3.10.20.90">
    <property type="entry name" value="Phosphatidylinositol 3-kinase Catalytic Subunit, Chain A, domain 1"/>
    <property type="match status" value="1"/>
</dbReference>
<dbReference type="Gene3D" id="3.30.1520.10">
    <property type="entry name" value="Phox-like domain"/>
    <property type="match status" value="1"/>
</dbReference>
<dbReference type="InterPro" id="IPR001478">
    <property type="entry name" value="PDZ"/>
</dbReference>
<dbReference type="InterPro" id="IPR036034">
    <property type="entry name" value="PDZ_sf"/>
</dbReference>
<dbReference type="InterPro" id="IPR001683">
    <property type="entry name" value="PX_dom"/>
</dbReference>
<dbReference type="InterPro" id="IPR036871">
    <property type="entry name" value="PX_dom_sf"/>
</dbReference>
<dbReference type="InterPro" id="IPR000159">
    <property type="entry name" value="RA_dom"/>
</dbReference>
<dbReference type="InterPro" id="IPR037827">
    <property type="entry name" value="SNX27_FERM-like_dom"/>
</dbReference>
<dbReference type="InterPro" id="IPR037833">
    <property type="entry name" value="SNX27_PX"/>
</dbReference>
<dbReference type="InterPro" id="IPR037835">
    <property type="entry name" value="SNX27_RA"/>
</dbReference>
<dbReference type="InterPro" id="IPR029071">
    <property type="entry name" value="Ubiquitin-like_domsf"/>
</dbReference>
<dbReference type="PANTHER" id="PTHR12431">
    <property type="entry name" value="SORTING NEXIN 17 AND 27"/>
    <property type="match status" value="1"/>
</dbReference>
<dbReference type="PANTHER" id="PTHR12431:SF19">
    <property type="entry name" value="SORTING NEXIN-27"/>
    <property type="match status" value="1"/>
</dbReference>
<dbReference type="Pfam" id="PF00595">
    <property type="entry name" value="PDZ"/>
    <property type="match status" value="1"/>
</dbReference>
<dbReference type="Pfam" id="PF00787">
    <property type="entry name" value="PX"/>
    <property type="match status" value="1"/>
</dbReference>
<dbReference type="Pfam" id="PF00788">
    <property type="entry name" value="RA"/>
    <property type="match status" value="1"/>
</dbReference>
<dbReference type="SMART" id="SM00228">
    <property type="entry name" value="PDZ"/>
    <property type="match status" value="1"/>
</dbReference>
<dbReference type="SMART" id="SM00312">
    <property type="entry name" value="PX"/>
    <property type="match status" value="1"/>
</dbReference>
<dbReference type="SUPFAM" id="SSF50156">
    <property type="entry name" value="PDZ domain-like"/>
    <property type="match status" value="1"/>
</dbReference>
<dbReference type="SUPFAM" id="SSF64268">
    <property type="entry name" value="PX domain"/>
    <property type="match status" value="1"/>
</dbReference>
<dbReference type="SUPFAM" id="SSF54236">
    <property type="entry name" value="Ubiquitin-like"/>
    <property type="match status" value="1"/>
</dbReference>
<dbReference type="PROSITE" id="PS50106">
    <property type="entry name" value="PDZ"/>
    <property type="match status" value="1"/>
</dbReference>
<dbReference type="PROSITE" id="PS50195">
    <property type="entry name" value="PX"/>
    <property type="match status" value="1"/>
</dbReference>
<dbReference type="PROSITE" id="PS50200">
    <property type="entry name" value="RA"/>
    <property type="match status" value="1"/>
</dbReference>
<gene>
    <name type="primary">SNX27</name>
</gene>
<name>SNX27_BOVIN</name>
<feature type="chain" id="PRO_0000315355" description="Sorting nexin-27">
    <location>
        <begin position="1"/>
        <end position="541"/>
    </location>
</feature>
<feature type="domain" description="PDZ" evidence="3">
    <location>
        <begin position="43"/>
        <end position="136"/>
    </location>
</feature>
<feature type="domain" description="PX" evidence="4">
    <location>
        <begin position="161"/>
        <end position="269"/>
    </location>
</feature>
<feature type="domain" description="Ras-associating" evidence="5">
    <location>
        <begin position="273"/>
        <end position="362"/>
    </location>
</feature>
<feature type="region of interest" description="Disordered" evidence="6">
    <location>
        <begin position="1"/>
        <end position="26"/>
    </location>
</feature>
<feature type="region of interest" description="FERM-like region F1" evidence="1">
    <location>
        <begin position="273"/>
        <end position="362"/>
    </location>
</feature>
<feature type="region of interest" description="FERM-like region F2" evidence="1">
    <location>
        <begin position="373"/>
        <end position="421"/>
    </location>
</feature>
<feature type="region of interest" description="FERM-like region F3" evidence="1">
    <location>
        <begin position="425"/>
        <end position="525"/>
    </location>
</feature>
<feature type="compositionally biased region" description="Gly residues" evidence="6">
    <location>
        <begin position="17"/>
        <end position="26"/>
    </location>
</feature>
<feature type="modified residue" description="Phosphoserine" evidence="2">
    <location>
        <position position="51"/>
    </location>
</feature>
<feature type="modified residue" description="Phosphoserine" evidence="2">
    <location>
        <position position="62"/>
    </location>
</feature>
<accession>A5PKA5</accession>
<sequence length="541" mass="61127">MADEDGEGIHPAAPHRNGGGGGGGGSGLHCAGNGGGGGGGPRVVRIVKSESGYGFNVRGQVSEGGQLRSINGELYAPLQHVSAVLPGGAADRAGVRKGDRILEVNGVNVEGATHKQVVDLIRAGEKELILTVLSVPPHEADNLDPSDDSLGQSFYDYTEKQAVPISVPTYKHVEQNGEKFVVYNVYMAGRQLCSKRYREFAILHQNLKREFANFTFPRLPGKWPFSLSEQQLDARRRGLEEYLEKVCSIRVIGESDIMQEFLSESDENYNGVSDVELRVALPDGTTVTVRVKKNSTTDQVYQAIAAKVGMDSTTVNYFALFEVINHSFVRKLAPNEFPHKLYVQNYTSAVPGTCLTIRKWLFTTEEEILLNDNDLAVTYFFHQAVDDVKKGYIKAEEKSYQLQKLYEQRKMVMYLNMLRTCEGYNEIIFPHCACDSRRKGHVITAISITHFKLHACTEEGQLENQVIAFEWDEMQRWDTDEEGMAFCFEYARGEKKPRWVKIFTPYFNYMHECFERVFCELKWRKENIFQMARSQQRDVAT</sequence>
<reference key="1">
    <citation type="submission" date="2007-06" db="EMBL/GenBank/DDBJ databases">
        <authorList>
            <consortium name="NIH - Mammalian Gene Collection (MGC) project"/>
        </authorList>
    </citation>
    <scope>NUCLEOTIDE SEQUENCE [LARGE SCALE MRNA]</scope>
    <source>
        <strain>Hereford</strain>
        <tissue>Fetal pons</tissue>
    </source>
</reference>